<accession>Q9C0B0</accession>
<evidence type="ECO:0000255" key="1"/>
<evidence type="ECO:0000255" key="2">
    <source>
        <dbReference type="PROSITE-ProRule" id="PRU00723"/>
    </source>
</evidence>
<evidence type="ECO:0000256" key="3">
    <source>
        <dbReference type="SAM" id="MobiDB-lite"/>
    </source>
</evidence>
<evidence type="ECO:0000269" key="4">
    <source>
    </source>
</evidence>
<evidence type="ECO:0000305" key="5"/>
<evidence type="ECO:0007744" key="6">
    <source>
    </source>
</evidence>
<evidence type="ECO:0007744" key="7">
    <source>
    </source>
</evidence>
<evidence type="ECO:0007744" key="8">
    <source>
    </source>
</evidence>
<evidence type="ECO:0007744" key="9">
    <source>
    </source>
</evidence>
<evidence type="ECO:0007744" key="10">
    <source>
    </source>
</evidence>
<sequence>MSKGPGPGGSAASSAPPAATAQVLQAQPEKPQHYTYLKEFRTEQCPLFVQHKCTQHRPYTCFHWHFVNQRRRRSIRRRDGTFNYSPDVYCTKYDEATGLCPEGDECPFLHRTTGDTERRYHLRYYKTGICIHETDSKGNCTKNGLHCAFAHGPHDLRSPVYDIRELQAMEALQNGQTTVEGSIEGQSAGAASHAMIEKILSEEPRWQETAYVLGNYKTEPCKKPPRLCRQGYACPYYHNSKDRRRSPRKHKYRSSPCPNVKHGDEWGDPGKCENGDACQYCHTRTEQQFHPEIYKSTKCNDMQQSGSCPRGPFCAFAHVEQPPLSDDLQPSSAVSSPTQPGPVLYMPSAAGDSVPVSPSSPHAPDLSALLCRNSSLGSPSNLCGSPPGSIRKPPNLEGIVFPGESGLAPGSYKKAPGFEREDQVGAEYLKNFKCQAKLKPHSLEPRSQEQPLLQPKQDMLGILPAGSPLTSSISSSITSSLAATPPSPVGTSSVPGMNANALPFYPTSDTVESVIESALDDLDLNEFGVAALEKTFDNSTVPHPGSITIGGSLLQSSAPVNIPGSLGSSASFHSASPSPPVSLSSHFLQQPQGHLSQSENTFLGTSASHGSLGLNGMNSSIWEHFASGSFSPGTSPAFLSGPGAAELARLRQELDEANSTIKQWEESWKQAKQACDAWKKEAEEAGERASAAGAECELAREQRDALEVQVKKLQEELERLHAGPEPQALPAFSDLEALSLSTLYSLQKQLRAHLEQVDKAVFHMQSVKCLKCQEQKRAVLPCQHAALCELCAEGSECPICQPGRAHTLQS</sequence>
<feature type="chain" id="PRO_0000213899" description="RING finger protein unkempt homolog">
    <location>
        <begin position="1"/>
        <end position="810"/>
    </location>
</feature>
<feature type="zinc finger region" description="C3H1-type 1" evidence="2">
    <location>
        <begin position="84"/>
        <end position="113"/>
    </location>
</feature>
<feature type="zinc finger region" description="C3H1-type 2" evidence="2">
    <location>
        <begin position="124"/>
        <end position="154"/>
    </location>
</feature>
<feature type="zinc finger region" description="C3H1-type 3" evidence="2">
    <location>
        <begin position="215"/>
        <end position="241"/>
    </location>
</feature>
<feature type="zinc finger region" description="C3H1-type 4" evidence="2">
    <location>
        <begin position="251"/>
        <end position="285"/>
    </location>
</feature>
<feature type="zinc finger region" description="C3H1-type 5" evidence="2">
    <location>
        <begin position="293"/>
        <end position="321"/>
    </location>
</feature>
<feature type="zinc finger region" description="RING-type; degenerate">
    <location>
        <begin position="766"/>
        <end position="801"/>
    </location>
</feature>
<feature type="region of interest" description="Disordered" evidence="3">
    <location>
        <begin position="1"/>
        <end position="24"/>
    </location>
</feature>
<feature type="region of interest" description="Disordered" evidence="3">
    <location>
        <begin position="239"/>
        <end position="265"/>
    </location>
</feature>
<feature type="region of interest" description="Disordered" evidence="3">
    <location>
        <begin position="324"/>
        <end position="343"/>
    </location>
</feature>
<feature type="coiled-coil region" evidence="1">
    <location>
        <begin position="643"/>
        <end position="723"/>
    </location>
</feature>
<feature type="compositionally biased region" description="Low complexity" evidence="3">
    <location>
        <begin position="10"/>
        <end position="19"/>
    </location>
</feature>
<feature type="compositionally biased region" description="Basic residues" evidence="3">
    <location>
        <begin position="241"/>
        <end position="253"/>
    </location>
</feature>
<feature type="compositionally biased region" description="Polar residues" evidence="3">
    <location>
        <begin position="328"/>
        <end position="338"/>
    </location>
</feature>
<feature type="modified residue" description="Phosphoserine" evidence="9">
    <location>
        <position position="240"/>
    </location>
</feature>
<feature type="modified residue" description="Phosphoserine" evidence="10">
    <location>
        <position position="374"/>
    </location>
</feature>
<feature type="modified residue" description="Phosphoserine" evidence="7">
    <location>
        <position position="378"/>
    </location>
</feature>
<feature type="modified residue" description="Phosphoserine" evidence="6 7 8 9 10">
    <location>
        <position position="385"/>
    </location>
</feature>
<feature type="modified residue" description="Phosphoserine" evidence="10">
    <location>
        <position position="631"/>
    </location>
</feature>
<dbReference type="EMBL" id="AB051540">
    <property type="protein sequence ID" value="BAB21844.1"/>
    <property type="status" value="ALT_INIT"/>
    <property type="molecule type" value="mRNA"/>
</dbReference>
<dbReference type="EMBL" id="BC053362">
    <property type="protein sequence ID" value="AAH53362.1"/>
    <property type="status" value="ALT_INIT"/>
    <property type="molecule type" value="mRNA"/>
</dbReference>
<dbReference type="CCDS" id="CCDS45778.2"/>
<dbReference type="RefSeq" id="NP_001073888.2">
    <property type="nucleotide sequence ID" value="NM_001080419.3"/>
</dbReference>
<dbReference type="SMR" id="Q9C0B0"/>
<dbReference type="BioGRID" id="124536">
    <property type="interactions" value="411"/>
</dbReference>
<dbReference type="FunCoup" id="Q9C0B0">
    <property type="interactions" value="716"/>
</dbReference>
<dbReference type="IntAct" id="Q9C0B0">
    <property type="interactions" value="13"/>
</dbReference>
<dbReference type="MINT" id="Q9C0B0"/>
<dbReference type="STRING" id="9606.ENSP00000464893"/>
<dbReference type="GlyCosmos" id="Q9C0B0">
    <property type="glycosylation" value="4 sites, 1 glycan"/>
</dbReference>
<dbReference type="GlyGen" id="Q9C0B0">
    <property type="glycosylation" value="5 sites, 1 N-linked glycan (1 site), 1 O-linked glycan (4 sites)"/>
</dbReference>
<dbReference type="iPTMnet" id="Q9C0B0"/>
<dbReference type="PhosphoSitePlus" id="Q9C0B0"/>
<dbReference type="BioMuta" id="UNK"/>
<dbReference type="DMDM" id="47117622"/>
<dbReference type="jPOST" id="Q9C0B0"/>
<dbReference type="MassIVE" id="Q9C0B0"/>
<dbReference type="PaxDb" id="9606-ENSP00000464893"/>
<dbReference type="PeptideAtlas" id="Q9C0B0"/>
<dbReference type="ProteomicsDB" id="79981"/>
<dbReference type="Pumba" id="Q9C0B0"/>
<dbReference type="Antibodypedia" id="32266">
    <property type="antibodies" value="77 antibodies from 15 providers"/>
</dbReference>
<dbReference type="DNASU" id="85451"/>
<dbReference type="Ensembl" id="ENST00000589666.6">
    <property type="protein sequence ID" value="ENSP00000464893.1"/>
    <property type="gene ID" value="ENSG00000132478.10"/>
</dbReference>
<dbReference type="GeneID" id="85451"/>
<dbReference type="KEGG" id="hsa:85451"/>
<dbReference type="MANE-Select" id="ENST00000589666.6">
    <property type="protein sequence ID" value="ENSP00000464893.1"/>
    <property type="RefSeq nucleotide sequence ID" value="NM_001080419.3"/>
    <property type="RefSeq protein sequence ID" value="NP_001073888.2"/>
</dbReference>
<dbReference type="UCSC" id="uc021udd.3">
    <property type="organism name" value="human"/>
</dbReference>
<dbReference type="AGR" id="HGNC:29369"/>
<dbReference type="CTD" id="85451"/>
<dbReference type="DisGeNET" id="85451"/>
<dbReference type="GeneCards" id="UNK"/>
<dbReference type="HGNC" id="HGNC:29369">
    <property type="gene designation" value="UNK"/>
</dbReference>
<dbReference type="HPA" id="ENSG00000132478">
    <property type="expression patterns" value="Low tissue specificity"/>
</dbReference>
<dbReference type="MIM" id="616375">
    <property type="type" value="gene"/>
</dbReference>
<dbReference type="neXtProt" id="NX_Q9C0B0"/>
<dbReference type="OpenTargets" id="ENSG00000132478"/>
<dbReference type="PharmGKB" id="PA162408651"/>
<dbReference type="VEuPathDB" id="HostDB:ENSG00000132478"/>
<dbReference type="eggNOG" id="KOG1100">
    <property type="taxonomic scope" value="Eukaryota"/>
</dbReference>
<dbReference type="eggNOG" id="KOG1595">
    <property type="taxonomic scope" value="Eukaryota"/>
</dbReference>
<dbReference type="GeneTree" id="ENSGT00940000159360"/>
<dbReference type="HOGENOM" id="CLU_014526_1_0_1"/>
<dbReference type="InParanoid" id="Q9C0B0"/>
<dbReference type="OMA" id="KCACEAW"/>
<dbReference type="OrthoDB" id="20534at2759"/>
<dbReference type="PAN-GO" id="Q9C0B0">
    <property type="GO annotations" value="2 GO annotations based on evolutionary models"/>
</dbReference>
<dbReference type="PhylomeDB" id="Q9C0B0"/>
<dbReference type="TreeFam" id="TF314982"/>
<dbReference type="PathwayCommons" id="Q9C0B0"/>
<dbReference type="SignaLink" id="Q9C0B0"/>
<dbReference type="SIGNOR" id="Q9C0B0"/>
<dbReference type="BioGRID-ORCS" id="85451">
    <property type="hits" value="17 hits in 1198 CRISPR screens"/>
</dbReference>
<dbReference type="ChiTaRS" id="UNK">
    <property type="organism name" value="human"/>
</dbReference>
<dbReference type="GenomeRNAi" id="85451"/>
<dbReference type="Pharos" id="Q9C0B0">
    <property type="development level" value="Tbio"/>
</dbReference>
<dbReference type="PRO" id="PR:Q9C0B0"/>
<dbReference type="Proteomes" id="UP000005640">
    <property type="component" value="Chromosome 17"/>
</dbReference>
<dbReference type="RNAct" id="Q9C0B0">
    <property type="molecule type" value="protein"/>
</dbReference>
<dbReference type="Bgee" id="ENSG00000132478">
    <property type="expression patterns" value="Expressed in primordial germ cell in gonad and 172 other cell types or tissues"/>
</dbReference>
<dbReference type="ExpressionAtlas" id="Q9C0B0">
    <property type="expression patterns" value="baseline and differential"/>
</dbReference>
<dbReference type="GO" id="GO:0005737">
    <property type="term" value="C:cytoplasm"/>
    <property type="evidence" value="ECO:0000314"/>
    <property type="project" value="UniProtKB"/>
</dbReference>
<dbReference type="GO" id="GO:1990715">
    <property type="term" value="F:mRNA CDS binding"/>
    <property type="evidence" value="ECO:0000314"/>
    <property type="project" value="GO_Central"/>
</dbReference>
<dbReference type="GO" id="GO:0043022">
    <property type="term" value="F:ribosome binding"/>
    <property type="evidence" value="ECO:0007669"/>
    <property type="project" value="Ensembl"/>
</dbReference>
<dbReference type="GO" id="GO:0003723">
    <property type="term" value="F:RNA binding"/>
    <property type="evidence" value="ECO:0007005"/>
    <property type="project" value="UniProtKB"/>
</dbReference>
<dbReference type="GO" id="GO:0008270">
    <property type="term" value="F:zinc ion binding"/>
    <property type="evidence" value="ECO:0007669"/>
    <property type="project" value="UniProtKB-KW"/>
</dbReference>
<dbReference type="GO" id="GO:0048667">
    <property type="term" value="P:cell morphogenesis involved in neuron differentiation"/>
    <property type="evidence" value="ECO:0000315"/>
    <property type="project" value="UniProtKB"/>
</dbReference>
<dbReference type="GO" id="GO:0001701">
    <property type="term" value="P:in utero embryonic development"/>
    <property type="evidence" value="ECO:0007669"/>
    <property type="project" value="Ensembl"/>
</dbReference>
<dbReference type="GO" id="GO:2000766">
    <property type="term" value="P:negative regulation of cytoplasmic translation"/>
    <property type="evidence" value="ECO:0000315"/>
    <property type="project" value="GO_Central"/>
</dbReference>
<dbReference type="GO" id="GO:0001764">
    <property type="term" value="P:neuron migration"/>
    <property type="evidence" value="ECO:0007669"/>
    <property type="project" value="Ensembl"/>
</dbReference>
<dbReference type="CDD" id="cd16771">
    <property type="entry name" value="RING-HC_UNK"/>
    <property type="match status" value="1"/>
</dbReference>
<dbReference type="Gene3D" id="4.10.1000.10">
    <property type="entry name" value="Zinc finger, CCCH-type"/>
    <property type="match status" value="2"/>
</dbReference>
<dbReference type="InterPro" id="IPR045234">
    <property type="entry name" value="Unkempt-like"/>
</dbReference>
<dbReference type="InterPro" id="IPR040594">
    <property type="entry name" value="Unkempt_Znf"/>
</dbReference>
<dbReference type="InterPro" id="IPR000571">
    <property type="entry name" value="Znf_CCCH"/>
</dbReference>
<dbReference type="InterPro" id="IPR036855">
    <property type="entry name" value="Znf_CCCH_sf"/>
</dbReference>
<dbReference type="PANTHER" id="PTHR14493:SF36">
    <property type="entry name" value="RING FINGER PROTEIN UNKEMPT HOMOLOG"/>
    <property type="match status" value="1"/>
</dbReference>
<dbReference type="PANTHER" id="PTHR14493">
    <property type="entry name" value="UNKEMPT FAMILY MEMBER"/>
    <property type="match status" value="1"/>
</dbReference>
<dbReference type="Pfam" id="PF00642">
    <property type="entry name" value="zf-CCCH"/>
    <property type="match status" value="1"/>
</dbReference>
<dbReference type="Pfam" id="PF23261">
    <property type="entry name" value="zf-CCCH_11"/>
    <property type="match status" value="1"/>
</dbReference>
<dbReference type="Pfam" id="PF25427">
    <property type="entry name" value="zf-CCCH_UNK"/>
    <property type="match status" value="1"/>
</dbReference>
<dbReference type="Pfam" id="PF23035">
    <property type="entry name" value="zf-CCCH_UNK-like_4th"/>
    <property type="match status" value="1"/>
</dbReference>
<dbReference type="Pfam" id="PF18384">
    <property type="entry name" value="zf_CCCH_5"/>
    <property type="match status" value="1"/>
</dbReference>
<dbReference type="SMART" id="SM00356">
    <property type="entry name" value="ZnF_C3H1"/>
    <property type="match status" value="5"/>
</dbReference>
<dbReference type="SUPFAM" id="SSF90229">
    <property type="entry name" value="CCCH zinc finger"/>
    <property type="match status" value="1"/>
</dbReference>
<dbReference type="PROSITE" id="PS50103">
    <property type="entry name" value="ZF_C3H1"/>
    <property type="match status" value="5"/>
</dbReference>
<gene>
    <name type="primary">UNK</name>
    <name type="synonym">KIAA1753</name>
    <name type="synonym">ZC3H5</name>
    <name type="synonym">ZC3HDC5</name>
</gene>
<proteinExistence type="evidence at protein level"/>
<reference key="1">
    <citation type="journal article" date="2000" name="DNA Res.">
        <title>Prediction of the coding sequences of unidentified human genes. XIX. The complete sequences of 100 new cDNA clones from brain which code for large proteins in vitro.</title>
        <authorList>
            <person name="Nagase T."/>
            <person name="Kikuno R."/>
            <person name="Hattori A."/>
            <person name="Kondo Y."/>
            <person name="Okumura K."/>
            <person name="Ohara O."/>
        </authorList>
    </citation>
    <scope>NUCLEOTIDE SEQUENCE [LARGE SCALE MRNA]</scope>
    <source>
        <tissue>Brain</tissue>
    </source>
</reference>
<reference key="2">
    <citation type="journal article" date="2004" name="Genome Res.">
        <title>The status, quality, and expansion of the NIH full-length cDNA project: the Mammalian Gene Collection (MGC).</title>
        <authorList>
            <consortium name="The MGC Project Team"/>
        </authorList>
    </citation>
    <scope>NUCLEOTIDE SEQUENCE [LARGE SCALE MRNA]</scope>
    <source>
        <tissue>Testis</tissue>
    </source>
</reference>
<reference key="3">
    <citation type="journal article" date="2008" name="J. Proteome Res.">
        <title>Combining protein-based IMAC, peptide-based IMAC, and MudPIT for efficient phosphoproteomic analysis.</title>
        <authorList>
            <person name="Cantin G.T."/>
            <person name="Yi W."/>
            <person name="Lu B."/>
            <person name="Park S.K."/>
            <person name="Xu T."/>
            <person name="Lee J.-D."/>
            <person name="Yates J.R. III"/>
        </authorList>
    </citation>
    <scope>PHOSPHORYLATION [LARGE SCALE ANALYSIS] AT SER-385</scope>
    <scope>IDENTIFICATION BY MASS SPECTROMETRY [LARGE SCALE ANALYSIS]</scope>
    <source>
        <tissue>Cervix carcinoma</tissue>
    </source>
</reference>
<reference key="4">
    <citation type="journal article" date="2008" name="Proc. Natl. Acad. Sci. U.S.A.">
        <title>A quantitative atlas of mitotic phosphorylation.</title>
        <authorList>
            <person name="Dephoure N."/>
            <person name="Zhou C."/>
            <person name="Villen J."/>
            <person name="Beausoleil S.A."/>
            <person name="Bakalarski C.E."/>
            <person name="Elledge S.J."/>
            <person name="Gygi S.P."/>
        </authorList>
    </citation>
    <scope>PHOSPHORYLATION [LARGE SCALE ANALYSIS] AT SER-378 AND SER-385</scope>
    <scope>IDENTIFICATION BY MASS SPECTROMETRY [LARGE SCALE ANALYSIS]</scope>
    <source>
        <tissue>Cervix carcinoma</tissue>
    </source>
</reference>
<reference key="5">
    <citation type="journal article" date="2009" name="Anal. Chem.">
        <title>Lys-N and trypsin cover complementary parts of the phosphoproteome in a refined SCX-based approach.</title>
        <authorList>
            <person name="Gauci S."/>
            <person name="Helbig A.O."/>
            <person name="Slijper M."/>
            <person name="Krijgsveld J."/>
            <person name="Heck A.J."/>
            <person name="Mohammed S."/>
        </authorList>
    </citation>
    <scope>IDENTIFICATION BY MASS SPECTROMETRY [LARGE SCALE ANALYSIS]</scope>
</reference>
<reference key="6">
    <citation type="journal article" date="2010" name="Sci. Signal.">
        <title>Quantitative phosphoproteomics reveals widespread full phosphorylation site occupancy during mitosis.</title>
        <authorList>
            <person name="Olsen J.V."/>
            <person name="Vermeulen M."/>
            <person name="Santamaria A."/>
            <person name="Kumar C."/>
            <person name="Miller M.L."/>
            <person name="Jensen L.J."/>
            <person name="Gnad F."/>
            <person name="Cox J."/>
            <person name="Jensen T.S."/>
            <person name="Nigg E.A."/>
            <person name="Brunak S."/>
            <person name="Mann M."/>
        </authorList>
    </citation>
    <scope>PHOSPHORYLATION [LARGE SCALE ANALYSIS] AT SER-385</scope>
    <scope>IDENTIFICATION BY MASS SPECTROMETRY [LARGE SCALE ANALYSIS]</scope>
    <source>
        <tissue>Cervix carcinoma</tissue>
    </source>
</reference>
<reference key="7">
    <citation type="journal article" date="2011" name="BMC Syst. Biol.">
        <title>Initial characterization of the human central proteome.</title>
        <authorList>
            <person name="Burkard T.R."/>
            <person name="Planyavsky M."/>
            <person name="Kaupe I."/>
            <person name="Breitwieser F.P."/>
            <person name="Buerckstuemmer T."/>
            <person name="Bennett K.L."/>
            <person name="Superti-Furga G."/>
            <person name="Colinge J."/>
        </authorList>
    </citation>
    <scope>IDENTIFICATION BY MASS SPECTROMETRY [LARGE SCALE ANALYSIS]</scope>
</reference>
<reference key="8">
    <citation type="journal article" date="2013" name="J. Proteome Res.">
        <title>Toward a comprehensive characterization of a human cancer cell phosphoproteome.</title>
        <authorList>
            <person name="Zhou H."/>
            <person name="Di Palma S."/>
            <person name="Preisinger C."/>
            <person name="Peng M."/>
            <person name="Polat A.N."/>
            <person name="Heck A.J."/>
            <person name="Mohammed S."/>
        </authorList>
    </citation>
    <scope>PHOSPHORYLATION [LARGE SCALE ANALYSIS] AT SER-240 AND SER-385</scope>
    <scope>IDENTIFICATION BY MASS SPECTROMETRY [LARGE SCALE ANALYSIS]</scope>
    <source>
        <tissue>Cervix carcinoma</tissue>
        <tissue>Erythroleukemia</tissue>
    </source>
</reference>
<reference key="9">
    <citation type="journal article" date="2014" name="J. Proteomics">
        <title>An enzyme assisted RP-RPLC approach for in-depth analysis of human liver phosphoproteome.</title>
        <authorList>
            <person name="Bian Y."/>
            <person name="Song C."/>
            <person name="Cheng K."/>
            <person name="Dong M."/>
            <person name="Wang F."/>
            <person name="Huang J."/>
            <person name="Sun D."/>
            <person name="Wang L."/>
            <person name="Ye M."/>
            <person name="Zou H."/>
        </authorList>
    </citation>
    <scope>PHOSPHORYLATION [LARGE SCALE ANALYSIS] AT SER-374; SER-385 AND SER-631</scope>
    <scope>IDENTIFICATION BY MASS SPECTROMETRY [LARGE SCALE ANALYSIS]</scope>
    <source>
        <tissue>Liver</tissue>
    </source>
</reference>
<reference key="10">
    <citation type="journal article" date="2015" name="Genes Dev.">
        <title>Control of a neuronal morphology program by an RNA-binding zinc finger protein, Unkempt.</title>
        <authorList>
            <person name="Murn J."/>
            <person name="Zarnack K."/>
            <person name="Yang Y.J."/>
            <person name="Durak O."/>
            <person name="Murphy E.A."/>
            <person name="Cheloufi S."/>
            <person name="Gonzalez D.M."/>
            <person name="Teplova M."/>
            <person name="Curk T."/>
            <person name="Zuber J."/>
            <person name="Patel D.J."/>
            <person name="Ule J."/>
            <person name="Luscombe N.M."/>
            <person name="Tsai L.H."/>
            <person name="Walsh C.A."/>
            <person name="Shi Y."/>
        </authorList>
    </citation>
    <scope>FUNCTION</scope>
    <scope>SUBCELLULAR LOCATION</scope>
    <scope>RNA-BINDING</scope>
</reference>
<name>UNK_HUMAN</name>
<organism>
    <name type="scientific">Homo sapiens</name>
    <name type="common">Human</name>
    <dbReference type="NCBI Taxonomy" id="9606"/>
    <lineage>
        <taxon>Eukaryota</taxon>
        <taxon>Metazoa</taxon>
        <taxon>Chordata</taxon>
        <taxon>Craniata</taxon>
        <taxon>Vertebrata</taxon>
        <taxon>Euteleostomi</taxon>
        <taxon>Mammalia</taxon>
        <taxon>Eutheria</taxon>
        <taxon>Euarchontoglires</taxon>
        <taxon>Primates</taxon>
        <taxon>Haplorrhini</taxon>
        <taxon>Catarrhini</taxon>
        <taxon>Hominidae</taxon>
        <taxon>Homo</taxon>
    </lineage>
</organism>
<keyword id="KW-0175">Coiled coil</keyword>
<keyword id="KW-0963">Cytoplasm</keyword>
<keyword id="KW-0479">Metal-binding</keyword>
<keyword id="KW-0597">Phosphoprotein</keyword>
<keyword id="KW-1267">Proteomics identification</keyword>
<keyword id="KW-1185">Reference proteome</keyword>
<keyword id="KW-0677">Repeat</keyword>
<keyword id="KW-0678">Repressor</keyword>
<keyword id="KW-0694">RNA-binding</keyword>
<keyword id="KW-0810">Translation regulation</keyword>
<keyword id="KW-0862">Zinc</keyword>
<keyword id="KW-0863">Zinc-finger</keyword>
<comment type="function">
    <text evidence="4">Sequence-specific RNA-binding protein which plays an important role in the establishment and maintenance of the early morphology of cortical neurons during embryonic development. Acts as a translation repressor and controls a translationally regulated cell morphology program to ensure proper structuring of the nervous system. Translational control depends on recognition of its binding element within target mRNAs which consists of a mandatory UAG trimer upstream of a U/A-rich motif. Associated with polysomes (PubMed:25737280).</text>
</comment>
<comment type="subcellular location">
    <subcellularLocation>
        <location evidence="4">Cytoplasm</location>
    </subcellularLocation>
</comment>
<comment type="similarity">
    <text evidence="5">Belongs to the unkempt family.</text>
</comment>
<comment type="sequence caution" evidence="5">
    <conflict type="erroneous initiation">
        <sequence resource="EMBL-CDS" id="AAH53362"/>
    </conflict>
    <text>Extended N-terminus.</text>
</comment>
<comment type="sequence caution" evidence="5">
    <conflict type="erroneous initiation">
        <sequence resource="EMBL-CDS" id="BAB21844"/>
    </conflict>
    <text>Extended N-terminus.</text>
</comment>
<protein>
    <recommendedName>
        <fullName>RING finger protein unkempt homolog</fullName>
    </recommendedName>
    <alternativeName>
        <fullName>Zinc finger CCCH domain-containing protein 5</fullName>
    </alternativeName>
</protein>